<evidence type="ECO:0000250" key="1">
    <source>
        <dbReference type="UniProtKB" id="Q9BRT6"/>
    </source>
</evidence>
<evidence type="ECO:0000255" key="2"/>
<evidence type="ECO:0000256" key="3">
    <source>
        <dbReference type="SAM" id="MobiDB-lite"/>
    </source>
</evidence>
<evidence type="ECO:0000269" key="4">
    <source>
    </source>
</evidence>
<evidence type="ECO:0000303" key="5">
    <source>
    </source>
</evidence>
<evidence type="ECO:0000305" key="6"/>
<comment type="function">
    <text evidence="4">In hippocampal neurons, regulates dendritic and spine growth and synaptic transmission.</text>
</comment>
<comment type="subunit">
    <text evidence="4">Interacts with CTCF, MYO1C and with the transcriptional machinery, including RNA polymerase II and TBP.</text>
</comment>
<comment type="subcellular location">
    <subcellularLocation>
        <location evidence="4">Nucleus</location>
        <location evidence="4">Nucleolus</location>
    </subcellularLocation>
    <subcellularLocation>
        <location evidence="1">Chromosome</location>
    </subcellularLocation>
    <text evidence="1 4">Cell-permeable protein. 22 hours after injection in the hippocampal area CA1, internalized by most cells at the injection site (PubMed:26961175). Localizes at the chromosome periphery during mitosis (By similarity).</text>
</comment>
<comment type="alternative products">
    <event type="alternative splicing"/>
    <isoform>
        <id>Q9D945-1</id>
        <name>1</name>
        <sequence type="displayed"/>
    </isoform>
    <isoform>
        <id>Q9D945-2</id>
        <name>2</name>
        <sequence type="described" ref="VSP_022719"/>
    </isoform>
</comment>
<comment type="tissue specificity">
    <text evidence="4">Widely expressed, with high levels in testis and spleen and low levels in heart. In the brain, expressed in the cortex and hippocampus, and at very low levels in the cerebellum.</text>
</comment>
<comment type="developmental stage">
    <text evidence="4">Strongly expressed in the brain in early developmental stages. Expression gradually decreases during development, from very high levels at 13 dpc down to hardly detectable in the adult at day 20 postnatal and later on (at protein level).</text>
</comment>
<comment type="induction">
    <text evidence="4">In the hippocampal neurons, down-regulated by sustained activity induced by increased extracellular potassium concentration for a prolonged time (2 - 5 hours) (at protein level).</text>
</comment>
<comment type="similarity">
    <text evidence="6">Belongs to the learning-associated protein family.</text>
</comment>
<sequence length="130" mass="15391">MAKSLRSKWKRKMRAEKRKKNAPRELNRLKSILRVDGDALMKDVEEIATVVVAKPRQEKMQCEEGRCDGADEEKDDMKMETEIKRNRKTLLDQHGQYPVWMNQRQRKRLKAKREKKRGKSRAKAAKGLAW</sequence>
<reference key="1">
    <citation type="journal article" date="2005" name="Science">
        <title>The transcriptional landscape of the mammalian genome.</title>
        <authorList>
            <person name="Carninci P."/>
            <person name="Kasukawa T."/>
            <person name="Katayama S."/>
            <person name="Gough J."/>
            <person name="Frith M.C."/>
            <person name="Maeda N."/>
            <person name="Oyama R."/>
            <person name="Ravasi T."/>
            <person name="Lenhard B."/>
            <person name="Wells C."/>
            <person name="Kodzius R."/>
            <person name="Shimokawa K."/>
            <person name="Bajic V.B."/>
            <person name="Brenner S.E."/>
            <person name="Batalov S."/>
            <person name="Forrest A.R."/>
            <person name="Zavolan M."/>
            <person name="Davis M.J."/>
            <person name="Wilming L.G."/>
            <person name="Aidinis V."/>
            <person name="Allen J.E."/>
            <person name="Ambesi-Impiombato A."/>
            <person name="Apweiler R."/>
            <person name="Aturaliya R.N."/>
            <person name="Bailey T.L."/>
            <person name="Bansal M."/>
            <person name="Baxter L."/>
            <person name="Beisel K.W."/>
            <person name="Bersano T."/>
            <person name="Bono H."/>
            <person name="Chalk A.M."/>
            <person name="Chiu K.P."/>
            <person name="Choudhary V."/>
            <person name="Christoffels A."/>
            <person name="Clutterbuck D.R."/>
            <person name="Crowe M.L."/>
            <person name="Dalla E."/>
            <person name="Dalrymple B.P."/>
            <person name="de Bono B."/>
            <person name="Della Gatta G."/>
            <person name="di Bernardo D."/>
            <person name="Down T."/>
            <person name="Engstrom P."/>
            <person name="Fagiolini M."/>
            <person name="Faulkner G."/>
            <person name="Fletcher C.F."/>
            <person name="Fukushima T."/>
            <person name="Furuno M."/>
            <person name="Futaki S."/>
            <person name="Gariboldi M."/>
            <person name="Georgii-Hemming P."/>
            <person name="Gingeras T.R."/>
            <person name="Gojobori T."/>
            <person name="Green R.E."/>
            <person name="Gustincich S."/>
            <person name="Harbers M."/>
            <person name="Hayashi Y."/>
            <person name="Hensch T.K."/>
            <person name="Hirokawa N."/>
            <person name="Hill D."/>
            <person name="Huminiecki L."/>
            <person name="Iacono M."/>
            <person name="Ikeo K."/>
            <person name="Iwama A."/>
            <person name="Ishikawa T."/>
            <person name="Jakt M."/>
            <person name="Kanapin A."/>
            <person name="Katoh M."/>
            <person name="Kawasawa Y."/>
            <person name="Kelso J."/>
            <person name="Kitamura H."/>
            <person name="Kitano H."/>
            <person name="Kollias G."/>
            <person name="Krishnan S.P."/>
            <person name="Kruger A."/>
            <person name="Kummerfeld S.K."/>
            <person name="Kurochkin I.V."/>
            <person name="Lareau L.F."/>
            <person name="Lazarevic D."/>
            <person name="Lipovich L."/>
            <person name="Liu J."/>
            <person name="Liuni S."/>
            <person name="McWilliam S."/>
            <person name="Madan Babu M."/>
            <person name="Madera M."/>
            <person name="Marchionni L."/>
            <person name="Matsuda H."/>
            <person name="Matsuzawa S."/>
            <person name="Miki H."/>
            <person name="Mignone F."/>
            <person name="Miyake S."/>
            <person name="Morris K."/>
            <person name="Mottagui-Tabar S."/>
            <person name="Mulder N."/>
            <person name="Nakano N."/>
            <person name="Nakauchi H."/>
            <person name="Ng P."/>
            <person name="Nilsson R."/>
            <person name="Nishiguchi S."/>
            <person name="Nishikawa S."/>
            <person name="Nori F."/>
            <person name="Ohara O."/>
            <person name="Okazaki Y."/>
            <person name="Orlando V."/>
            <person name="Pang K.C."/>
            <person name="Pavan W.J."/>
            <person name="Pavesi G."/>
            <person name="Pesole G."/>
            <person name="Petrovsky N."/>
            <person name="Piazza S."/>
            <person name="Reed J."/>
            <person name="Reid J.F."/>
            <person name="Ring B.Z."/>
            <person name="Ringwald M."/>
            <person name="Rost B."/>
            <person name="Ruan Y."/>
            <person name="Salzberg S.L."/>
            <person name="Sandelin A."/>
            <person name="Schneider C."/>
            <person name="Schoenbach C."/>
            <person name="Sekiguchi K."/>
            <person name="Semple C.A."/>
            <person name="Seno S."/>
            <person name="Sessa L."/>
            <person name="Sheng Y."/>
            <person name="Shibata Y."/>
            <person name="Shimada H."/>
            <person name="Shimada K."/>
            <person name="Silva D."/>
            <person name="Sinclair B."/>
            <person name="Sperling S."/>
            <person name="Stupka E."/>
            <person name="Sugiura K."/>
            <person name="Sultana R."/>
            <person name="Takenaka Y."/>
            <person name="Taki K."/>
            <person name="Tammoja K."/>
            <person name="Tan S.L."/>
            <person name="Tang S."/>
            <person name="Taylor M.S."/>
            <person name="Tegner J."/>
            <person name="Teichmann S.A."/>
            <person name="Ueda H.R."/>
            <person name="van Nimwegen E."/>
            <person name="Verardo R."/>
            <person name="Wei C.L."/>
            <person name="Yagi K."/>
            <person name="Yamanishi H."/>
            <person name="Zabarovsky E."/>
            <person name="Zhu S."/>
            <person name="Zimmer A."/>
            <person name="Hide W."/>
            <person name="Bult C."/>
            <person name="Grimmond S.M."/>
            <person name="Teasdale R.D."/>
            <person name="Liu E.T."/>
            <person name="Brusic V."/>
            <person name="Quackenbush J."/>
            <person name="Wahlestedt C."/>
            <person name="Mattick J.S."/>
            <person name="Hume D.A."/>
            <person name="Kai C."/>
            <person name="Sasaki D."/>
            <person name="Tomaru Y."/>
            <person name="Fukuda S."/>
            <person name="Kanamori-Katayama M."/>
            <person name="Suzuki M."/>
            <person name="Aoki J."/>
            <person name="Arakawa T."/>
            <person name="Iida J."/>
            <person name="Imamura K."/>
            <person name="Itoh M."/>
            <person name="Kato T."/>
            <person name="Kawaji H."/>
            <person name="Kawagashira N."/>
            <person name="Kawashima T."/>
            <person name="Kojima M."/>
            <person name="Kondo S."/>
            <person name="Konno H."/>
            <person name="Nakano K."/>
            <person name="Ninomiya N."/>
            <person name="Nishio T."/>
            <person name="Okada M."/>
            <person name="Plessy C."/>
            <person name="Shibata K."/>
            <person name="Shiraki T."/>
            <person name="Suzuki S."/>
            <person name="Tagami M."/>
            <person name="Waki K."/>
            <person name="Watahiki A."/>
            <person name="Okamura-Oho Y."/>
            <person name="Suzuki H."/>
            <person name="Kawai J."/>
            <person name="Hayashizaki Y."/>
        </authorList>
    </citation>
    <scope>NUCLEOTIDE SEQUENCE [LARGE SCALE MRNA] (ISOFORM 1)</scope>
    <source>
        <strain>C57BL/6J</strain>
        <tissue>Embryo</tissue>
        <tissue>Pancreas</tissue>
        <tissue>Visual cortex</tissue>
    </source>
</reference>
<reference key="2">
    <citation type="journal article" date="2004" name="Genome Res.">
        <title>The status, quality, and expansion of the NIH full-length cDNA project: the Mammalian Gene Collection (MGC).</title>
        <authorList>
            <consortium name="The MGC Project Team"/>
        </authorList>
    </citation>
    <scope>NUCLEOTIDE SEQUENCE [LARGE SCALE MRNA] (ISOFORMS 1 AND 2)</scope>
    <source>
        <strain>C57BL/6J</strain>
        <strain>Czech II</strain>
        <tissue>Mammary gland</tissue>
    </source>
</reference>
<reference key="3">
    <citation type="journal article" date="2010" name="Cell">
        <title>A tissue-specific atlas of mouse protein phosphorylation and expression.</title>
        <authorList>
            <person name="Huttlin E.L."/>
            <person name="Jedrychowski M.P."/>
            <person name="Elias J.E."/>
            <person name="Goswami T."/>
            <person name="Rad R."/>
            <person name="Beausoleil S.A."/>
            <person name="Villen J."/>
            <person name="Haas W."/>
            <person name="Sowa M.E."/>
            <person name="Gygi S.P."/>
        </authorList>
    </citation>
    <scope>IDENTIFICATION BY MASS SPECTROMETRY [LARGE SCALE ANALYSIS]</scope>
    <source>
        <tissue>Spleen</tissue>
    </source>
</reference>
<reference key="4">
    <citation type="journal article" date="2016" name="Sci. Rep.">
        <title>A transducible nuclear/nucleolar protein, mLLP, regulates neuronal morphogenesis and synaptic transmission.</title>
        <authorList>
            <person name="Yu N.K."/>
            <person name="Kim H.F."/>
            <person name="Shim J."/>
            <person name="Kim S."/>
            <person name="Kim D.W."/>
            <person name="Kwak C."/>
            <person name="Sim S.E."/>
            <person name="Choi J.H."/>
            <person name="Ahn S."/>
            <person name="Yoo J."/>
            <person name="Choi S.L."/>
            <person name="Jang D.J."/>
            <person name="Lim C.S."/>
            <person name="Lee Y.S."/>
            <person name="Kang C."/>
            <person name="Choi S.Y."/>
            <person name="Kaang B.K."/>
        </authorList>
    </citation>
    <scope>FUNCTION</scope>
    <scope>INTERACTION WITH CTCF; MYO1C; RNA POLYMERASE II AND TBP</scope>
    <scope>SUBCELLULAR LOCATION</scope>
    <scope>DEVELOPMENTAL STAGE</scope>
    <scope>TISSUE SPECIFICITY</scope>
    <scope>INDUCTION BY EXTRACELLULAR POTASSIUM</scope>
</reference>
<accession>Q9D945</accession>
<accession>Q3KQP9</accession>
<keyword id="KW-0025">Alternative splicing</keyword>
<keyword id="KW-0158">Chromosome</keyword>
<keyword id="KW-0175">Coiled coil</keyword>
<keyword id="KW-1017">Isopeptide bond</keyword>
<keyword id="KW-0539">Nucleus</keyword>
<keyword id="KW-1185">Reference proteome</keyword>
<keyword id="KW-0832">Ubl conjugation</keyword>
<gene>
    <name type="primary">Llph</name>
</gene>
<feature type="chain" id="PRO_0000274347" description="Protein LLP homolog">
    <location>
        <begin position="1"/>
        <end position="130"/>
    </location>
</feature>
<feature type="region of interest" description="Disordered" evidence="3">
    <location>
        <begin position="1"/>
        <end position="23"/>
    </location>
</feature>
<feature type="region of interest" description="Disordered" evidence="3">
    <location>
        <begin position="57"/>
        <end position="76"/>
    </location>
</feature>
<feature type="region of interest" description="Disordered" evidence="3">
    <location>
        <begin position="104"/>
        <end position="130"/>
    </location>
</feature>
<feature type="coiled-coil region" evidence="2">
    <location>
        <begin position="10"/>
        <end position="78"/>
    </location>
</feature>
<feature type="compositionally biased region" description="Basic residues" evidence="3">
    <location>
        <begin position="1"/>
        <end position="21"/>
    </location>
</feature>
<feature type="compositionally biased region" description="Basic residues" evidence="3">
    <location>
        <begin position="104"/>
        <end position="124"/>
    </location>
</feature>
<feature type="cross-link" description="Glycyl lysine isopeptide (Lys-Gly) (interchain with G-Cter in SUMO2)" evidence="1">
    <location>
        <position position="78"/>
    </location>
</feature>
<feature type="splice variant" id="VSP_022719" description="In isoform 2." evidence="5">
    <location>
        <position position="69"/>
    </location>
</feature>
<dbReference type="EMBL" id="AK004503">
    <property type="protein sequence ID" value="BAC25084.1"/>
    <property type="molecule type" value="mRNA"/>
</dbReference>
<dbReference type="EMBL" id="AK007375">
    <property type="protein sequence ID" value="BAB24995.1"/>
    <property type="molecule type" value="mRNA"/>
</dbReference>
<dbReference type="EMBL" id="AK158700">
    <property type="protein sequence ID" value="BAE34617.1"/>
    <property type="molecule type" value="mRNA"/>
</dbReference>
<dbReference type="EMBL" id="BC024098">
    <property type="protein sequence ID" value="AAH24098.1"/>
    <property type="molecule type" value="mRNA"/>
</dbReference>
<dbReference type="EMBL" id="BC096681">
    <property type="protein sequence ID" value="AAH96681.1"/>
    <property type="molecule type" value="mRNA"/>
</dbReference>
<dbReference type="EMBL" id="BC106103">
    <property type="protein sequence ID" value="AAI06104.1"/>
    <property type="molecule type" value="mRNA"/>
</dbReference>
<dbReference type="CCDS" id="CCDS24206.1">
    <molecule id="Q9D945-1"/>
</dbReference>
<dbReference type="RefSeq" id="NP_001404758.1">
    <molecule id="Q9D945-1"/>
    <property type="nucleotide sequence ID" value="NM_001417829.1"/>
</dbReference>
<dbReference type="RefSeq" id="NP_079707.1">
    <molecule id="Q9D945-1"/>
    <property type="nucleotide sequence ID" value="NM_025431.3"/>
</dbReference>
<dbReference type="RefSeq" id="XP_006514017.1">
    <property type="nucleotide sequence ID" value="XM_006513954.1"/>
</dbReference>
<dbReference type="SMR" id="Q9D945"/>
<dbReference type="FunCoup" id="Q9D945">
    <property type="interactions" value="2149"/>
</dbReference>
<dbReference type="STRING" id="10090.ENSMUSP00000020444"/>
<dbReference type="iPTMnet" id="Q9D945"/>
<dbReference type="PhosphoSitePlus" id="Q9D945"/>
<dbReference type="PaxDb" id="10090-ENSMUSP00000020444"/>
<dbReference type="PeptideAtlas" id="Q9D945"/>
<dbReference type="ProteomicsDB" id="292337">
    <molecule id="Q9D945-1"/>
</dbReference>
<dbReference type="ProteomicsDB" id="292338">
    <molecule id="Q9D945-2"/>
</dbReference>
<dbReference type="Pumba" id="Q9D945"/>
<dbReference type="Antibodypedia" id="53204">
    <property type="antibodies" value="99 antibodies from 19 providers"/>
</dbReference>
<dbReference type="DNASU" id="66225"/>
<dbReference type="Ensembl" id="ENSMUST00000020444.16">
    <molecule id="Q9D945-1"/>
    <property type="protein sequence ID" value="ENSMUSP00000020444.9"/>
    <property type="gene ID" value="ENSMUSG00000020224.16"/>
</dbReference>
<dbReference type="Ensembl" id="ENSMUST00000130198.3">
    <molecule id="Q9D945-1"/>
    <property type="protein sequence ID" value="ENSMUSP00000118254.3"/>
    <property type="gene ID" value="ENSMUSG00000020224.16"/>
</dbReference>
<dbReference type="GeneID" id="66225"/>
<dbReference type="KEGG" id="mmu:66225"/>
<dbReference type="UCSC" id="uc007hfa.1">
    <molecule id="Q9D945-1"/>
    <property type="organism name" value="mouse"/>
</dbReference>
<dbReference type="AGR" id="MGI:1913475"/>
<dbReference type="CTD" id="84298"/>
<dbReference type="MGI" id="MGI:1913475">
    <property type="gene designation" value="Llph"/>
</dbReference>
<dbReference type="VEuPathDB" id="HostDB:ENSMUSG00000020224"/>
<dbReference type="eggNOG" id="KOG4811">
    <property type="taxonomic scope" value="Eukaryota"/>
</dbReference>
<dbReference type="GeneTree" id="ENSGT00390000012979"/>
<dbReference type="HOGENOM" id="CLU_134502_0_0_1"/>
<dbReference type="InParanoid" id="Q9D945"/>
<dbReference type="OMA" id="YGNYPVW"/>
<dbReference type="OrthoDB" id="6257894at2759"/>
<dbReference type="PhylomeDB" id="Q9D945"/>
<dbReference type="TreeFam" id="TF314654"/>
<dbReference type="BioGRID-ORCS" id="66225">
    <property type="hits" value="7 hits in 74 CRISPR screens"/>
</dbReference>
<dbReference type="ChiTaRS" id="Llph">
    <property type="organism name" value="mouse"/>
</dbReference>
<dbReference type="PRO" id="PR:Q9D945"/>
<dbReference type="Proteomes" id="UP000000589">
    <property type="component" value="Chromosome 10"/>
</dbReference>
<dbReference type="RNAct" id="Q9D945">
    <property type="molecule type" value="protein"/>
</dbReference>
<dbReference type="Bgee" id="ENSMUSG00000020224">
    <property type="expression patterns" value="Expressed in blastoderm cell in morula and 106 other cell types or tissues"/>
</dbReference>
<dbReference type="ExpressionAtlas" id="Q9D945">
    <property type="expression patterns" value="baseline and differential"/>
</dbReference>
<dbReference type="GO" id="GO:0005694">
    <property type="term" value="C:chromosome"/>
    <property type="evidence" value="ECO:0000250"/>
    <property type="project" value="UniProtKB"/>
</dbReference>
<dbReference type="GO" id="GO:0005730">
    <property type="term" value="C:nucleolus"/>
    <property type="evidence" value="ECO:0000314"/>
    <property type="project" value="UniProtKB"/>
</dbReference>
<dbReference type="GO" id="GO:0001099">
    <property type="term" value="F:basal RNA polymerase II transcription machinery binding"/>
    <property type="evidence" value="ECO:0000314"/>
    <property type="project" value="UniProtKB"/>
</dbReference>
<dbReference type="GO" id="GO:0097484">
    <property type="term" value="P:dendrite extension"/>
    <property type="evidence" value="ECO:0000315"/>
    <property type="project" value="UniProtKB"/>
</dbReference>
<dbReference type="GO" id="GO:0060999">
    <property type="term" value="P:positive regulation of dendritic spine development"/>
    <property type="evidence" value="ECO:0000315"/>
    <property type="project" value="UniProtKB"/>
</dbReference>
<dbReference type="InterPro" id="IPR018784">
    <property type="entry name" value="LLPH-like"/>
</dbReference>
<dbReference type="PANTHER" id="PTHR34253">
    <property type="entry name" value="PROTEIN LLP HOMOLOG"/>
    <property type="match status" value="1"/>
</dbReference>
<dbReference type="PANTHER" id="PTHR34253:SF1">
    <property type="entry name" value="PROTEIN LLP HOMOLOG"/>
    <property type="match status" value="1"/>
</dbReference>
<dbReference type="Pfam" id="PF10169">
    <property type="entry name" value="LLPH"/>
    <property type="match status" value="1"/>
</dbReference>
<organism>
    <name type="scientific">Mus musculus</name>
    <name type="common">Mouse</name>
    <dbReference type="NCBI Taxonomy" id="10090"/>
    <lineage>
        <taxon>Eukaryota</taxon>
        <taxon>Metazoa</taxon>
        <taxon>Chordata</taxon>
        <taxon>Craniata</taxon>
        <taxon>Vertebrata</taxon>
        <taxon>Euteleostomi</taxon>
        <taxon>Mammalia</taxon>
        <taxon>Eutheria</taxon>
        <taxon>Euarchontoglires</taxon>
        <taxon>Glires</taxon>
        <taxon>Rodentia</taxon>
        <taxon>Myomorpha</taxon>
        <taxon>Muroidea</taxon>
        <taxon>Muridae</taxon>
        <taxon>Murinae</taxon>
        <taxon>Mus</taxon>
        <taxon>Mus</taxon>
    </lineage>
</organism>
<protein>
    <recommendedName>
        <fullName>Protein LLP homolog</fullName>
    </recommendedName>
    <alternativeName>
        <fullName>Protein LAPS18-like</fullName>
    </alternativeName>
</protein>
<proteinExistence type="evidence at protein level"/>
<name>LLPH_MOUSE</name>